<sequence length="402" mass="44105">MNIHMKRKTIKNLSALENRMLMLDGMPAVRVKTELVESEQGSPNVHNYPDMEAVPLLLNNVKGEPPEDSLPVDHFQTQTEPVDLSINKARTSPTAASSSPVSMTASASSPSSTSTSSSSSSRPASSPTVITSVSSASSSSTVLSPGPLVASASGVGGQQFLHIIHPVPPSSPMNLQSNKLSHVHRIPVVVQSVPVVYTAVRSPGNVNNTIVVPLLEDGRSHGKAQMEPRGLSPRQSKSDSDDDDLPNVTLDSVNETGSTALSIARAVQEVHPSPVSRVRGNRMNNQKFACSISPFSIESTRRQRRSESPDSRKRRIHRCDFEGCNKVYTKSSHLKAHRRTHTGEKPYKCTWEGCTWKFARSDELTRHYRKHTGVKPFKCADCDRSFSRSDHLALHRRRHMLV</sequence>
<protein>
    <recommendedName>
        <fullName>Krueppel-like factor 12</fullName>
    </recommendedName>
    <alternativeName>
        <fullName>Transcriptional repressor AP-2rep</fullName>
    </alternativeName>
</protein>
<reference key="1">
    <citation type="journal article" date="1999" name="Mol. Cell. Biol.">
        <title>Transcriptional regulation of the AP-2alpha promoter by BTEB-1 and AP-2rep, a novel wt-1/egr-related zinc finger repressor.</title>
        <authorList>
            <person name="Imhof A."/>
            <person name="Schuierer M."/>
            <person name="Werner O."/>
            <person name="Moser M."/>
            <person name="Roth C."/>
            <person name="Bauer R."/>
            <person name="Buettner R."/>
        </authorList>
    </citation>
    <scope>NUCLEOTIDE SEQUENCE [MRNA]</scope>
    <source>
        <strain>BALB/cJ</strain>
        <tissue>Brain</tissue>
    </source>
</reference>
<reference key="2">
    <citation type="journal article" date="2004" name="Genome Res.">
        <title>The status, quality, and expansion of the NIH full-length cDNA project: the Mammalian Gene Collection (MGC).</title>
        <authorList>
            <consortium name="The MGC Project Team"/>
        </authorList>
    </citation>
    <scope>NUCLEOTIDE SEQUENCE [LARGE SCALE MRNA]</scope>
    <source>
        <strain>CD-1</strain>
        <tissue>Neural stem cell</tissue>
    </source>
</reference>
<reference key="3">
    <citation type="journal article" date="2010" name="Cell">
        <title>A tissue-specific atlas of mouse protein phosphorylation and expression.</title>
        <authorList>
            <person name="Huttlin E.L."/>
            <person name="Jedrychowski M.P."/>
            <person name="Elias J.E."/>
            <person name="Goswami T."/>
            <person name="Rad R."/>
            <person name="Beausoleil S.A."/>
            <person name="Villen J."/>
            <person name="Haas W."/>
            <person name="Sowa M.E."/>
            <person name="Gygi S.P."/>
        </authorList>
    </citation>
    <scope>PHOSPHORYLATION [LARGE SCALE ANALYSIS] AT SER-202</scope>
    <scope>IDENTIFICATION BY MASS SPECTROMETRY [LARGE SCALE ANALYSIS]</scope>
    <source>
        <tissue>Brain</tissue>
        <tissue>Kidney</tissue>
        <tissue>Liver</tissue>
        <tissue>Testis</tissue>
    </source>
</reference>
<accession>O35738</accession>
<accession>Q6NWV9</accession>
<keyword id="KW-0238">DNA-binding</keyword>
<keyword id="KW-0479">Metal-binding</keyword>
<keyword id="KW-0488">Methylation</keyword>
<keyword id="KW-0539">Nucleus</keyword>
<keyword id="KW-0597">Phosphoprotein</keyword>
<keyword id="KW-1185">Reference proteome</keyword>
<keyword id="KW-0677">Repeat</keyword>
<keyword id="KW-0678">Repressor</keyword>
<keyword id="KW-0804">Transcription</keyword>
<keyword id="KW-0805">Transcription regulation</keyword>
<keyword id="KW-0862">Zinc</keyword>
<keyword id="KW-0863">Zinc-finger</keyword>
<name>KLF12_MOUSE</name>
<comment type="function">
    <text>Confers strong transcriptional repression to the AP-2-alpha gene. Binds to a regulatory element (A32) in the AP-2-alpha gene promoter.</text>
</comment>
<comment type="subcellular location">
    <subcellularLocation>
        <location>Nucleus</location>
    </subcellularLocation>
</comment>
<comment type="domain">
    <text evidence="1">The 9aaTAD motif is a transactivation domain present in a large number of yeast and animal transcription factors. In KLF12, the motif is inactive.</text>
</comment>
<comment type="similarity">
    <text evidence="4">Belongs to the Sp1 C2H2-type zinc-finger protein family.</text>
</comment>
<dbReference type="EMBL" id="Y14295">
    <property type="protein sequence ID" value="CAA74670.1"/>
    <property type="molecule type" value="mRNA"/>
</dbReference>
<dbReference type="EMBL" id="BC067408">
    <property type="protein sequence ID" value="AAH67408.1"/>
    <property type="molecule type" value="mRNA"/>
</dbReference>
<dbReference type="CCDS" id="CCDS36998.1"/>
<dbReference type="RefSeq" id="NP_001398638.1">
    <property type="nucleotide sequence ID" value="NM_001411709.1"/>
</dbReference>
<dbReference type="RefSeq" id="NP_034766.2">
    <property type="nucleotide sequence ID" value="NM_010636.3"/>
</dbReference>
<dbReference type="RefSeq" id="XP_006518686.1">
    <property type="nucleotide sequence ID" value="XM_006518623.3"/>
</dbReference>
<dbReference type="RefSeq" id="XP_006518687.1">
    <property type="nucleotide sequence ID" value="XM_006518624.3"/>
</dbReference>
<dbReference type="RefSeq" id="XP_011243270.1">
    <property type="nucleotide sequence ID" value="XM_011244968.4"/>
</dbReference>
<dbReference type="RefSeq" id="XP_011243271.1">
    <property type="nucleotide sequence ID" value="XM_011244969.2"/>
</dbReference>
<dbReference type="RefSeq" id="XP_036014378.1">
    <property type="nucleotide sequence ID" value="XM_036158485.1"/>
</dbReference>
<dbReference type="RefSeq" id="XP_036014379.1">
    <property type="nucleotide sequence ID" value="XM_036158486.1"/>
</dbReference>
<dbReference type="SMR" id="O35738"/>
<dbReference type="BioGRID" id="200963">
    <property type="interactions" value="9"/>
</dbReference>
<dbReference type="FunCoup" id="O35738">
    <property type="interactions" value="729"/>
</dbReference>
<dbReference type="STRING" id="10090.ENSMUSP00000153901"/>
<dbReference type="GlyGen" id="O35738">
    <property type="glycosylation" value="1 site, 1 N-linked glycan (1 site)"/>
</dbReference>
<dbReference type="iPTMnet" id="O35738"/>
<dbReference type="PhosphoSitePlus" id="O35738"/>
<dbReference type="PaxDb" id="10090-ENSMUSP00000094844"/>
<dbReference type="PeptideAtlas" id="O35738"/>
<dbReference type="ProteomicsDB" id="263618"/>
<dbReference type="Antibodypedia" id="24434">
    <property type="antibodies" value="289 antibodies from 30 providers"/>
</dbReference>
<dbReference type="DNASU" id="16597"/>
<dbReference type="Ensembl" id="ENSMUST00000097079.5">
    <property type="protein sequence ID" value="ENSMUSP00000094844.5"/>
    <property type="gene ID" value="ENSMUSG00000072294.6"/>
</dbReference>
<dbReference type="Ensembl" id="ENSMUST00000228216.2">
    <property type="protein sequence ID" value="ENSMUSP00000153901.2"/>
    <property type="gene ID" value="ENSMUSG00000072294.6"/>
</dbReference>
<dbReference type="GeneID" id="16597"/>
<dbReference type="KEGG" id="mmu:16597"/>
<dbReference type="UCSC" id="uc007uvh.2">
    <property type="organism name" value="mouse"/>
</dbReference>
<dbReference type="AGR" id="MGI:1333796"/>
<dbReference type="CTD" id="11278"/>
<dbReference type="MGI" id="MGI:1333796">
    <property type="gene designation" value="Klf12"/>
</dbReference>
<dbReference type="VEuPathDB" id="HostDB:ENSMUSG00000072294"/>
<dbReference type="eggNOG" id="KOG1721">
    <property type="taxonomic scope" value="Eukaryota"/>
</dbReference>
<dbReference type="GeneTree" id="ENSGT00940000158108"/>
<dbReference type="HOGENOM" id="CLU_002678_33_0_1"/>
<dbReference type="InParanoid" id="O35738"/>
<dbReference type="OMA" id="LNNAMML"/>
<dbReference type="OrthoDB" id="4748970at2759"/>
<dbReference type="PhylomeDB" id="O35738"/>
<dbReference type="TreeFam" id="TF350556"/>
<dbReference type="BioGRID-ORCS" id="16597">
    <property type="hits" value="3 hits in 77 CRISPR screens"/>
</dbReference>
<dbReference type="ChiTaRS" id="Klf12">
    <property type="organism name" value="mouse"/>
</dbReference>
<dbReference type="PRO" id="PR:O35738"/>
<dbReference type="Proteomes" id="UP000000589">
    <property type="component" value="Chromosome 14"/>
</dbReference>
<dbReference type="RNAct" id="O35738">
    <property type="molecule type" value="protein"/>
</dbReference>
<dbReference type="Bgee" id="ENSMUSG00000072294">
    <property type="expression patterns" value="Expressed in rostral migratory stream and 209 other cell types or tissues"/>
</dbReference>
<dbReference type="ExpressionAtlas" id="O35738">
    <property type="expression patterns" value="baseline and differential"/>
</dbReference>
<dbReference type="GO" id="GO:0005829">
    <property type="term" value="C:cytosol"/>
    <property type="evidence" value="ECO:0007669"/>
    <property type="project" value="Ensembl"/>
</dbReference>
<dbReference type="GO" id="GO:0005654">
    <property type="term" value="C:nucleoplasm"/>
    <property type="evidence" value="ECO:0007669"/>
    <property type="project" value="Ensembl"/>
</dbReference>
<dbReference type="GO" id="GO:0003677">
    <property type="term" value="F:DNA binding"/>
    <property type="evidence" value="ECO:0000314"/>
    <property type="project" value="MGI"/>
</dbReference>
<dbReference type="GO" id="GO:0003700">
    <property type="term" value="F:DNA-binding transcription factor activity"/>
    <property type="evidence" value="ECO:0000314"/>
    <property type="project" value="MGI"/>
</dbReference>
<dbReference type="GO" id="GO:0001227">
    <property type="term" value="F:DNA-binding transcription repressor activity, RNA polymerase II-specific"/>
    <property type="evidence" value="ECO:0000314"/>
    <property type="project" value="NTNU_SB"/>
</dbReference>
<dbReference type="GO" id="GO:0000978">
    <property type="term" value="F:RNA polymerase II cis-regulatory region sequence-specific DNA binding"/>
    <property type="evidence" value="ECO:0007669"/>
    <property type="project" value="Ensembl"/>
</dbReference>
<dbReference type="GO" id="GO:0000977">
    <property type="term" value="F:RNA polymerase II transcription regulatory region sequence-specific DNA binding"/>
    <property type="evidence" value="ECO:0000314"/>
    <property type="project" value="NTNU_SB"/>
</dbReference>
<dbReference type="GO" id="GO:0008270">
    <property type="term" value="F:zinc ion binding"/>
    <property type="evidence" value="ECO:0007669"/>
    <property type="project" value="UniProtKB-KW"/>
</dbReference>
<dbReference type="GO" id="GO:0000122">
    <property type="term" value="P:negative regulation of transcription by RNA polymerase II"/>
    <property type="evidence" value="ECO:0000314"/>
    <property type="project" value="NTNU_SB"/>
</dbReference>
<dbReference type="GO" id="GO:0045944">
    <property type="term" value="P:positive regulation of transcription by RNA polymerase II"/>
    <property type="evidence" value="ECO:0000314"/>
    <property type="project" value="MGI"/>
</dbReference>
<dbReference type="GO" id="GO:0006355">
    <property type="term" value="P:regulation of DNA-templated transcription"/>
    <property type="evidence" value="ECO:0000314"/>
    <property type="project" value="MGI"/>
</dbReference>
<dbReference type="CDD" id="cd21441">
    <property type="entry name" value="KLF12_N"/>
    <property type="match status" value="1"/>
</dbReference>
<dbReference type="FunFam" id="3.30.160.60:FF:000021">
    <property type="entry name" value="Basic krueppel-like factor 3"/>
    <property type="match status" value="1"/>
</dbReference>
<dbReference type="FunFam" id="3.30.160.60:FF:000018">
    <property type="entry name" value="Krueppel-like factor 15"/>
    <property type="match status" value="1"/>
</dbReference>
<dbReference type="FunFam" id="3.30.160.60:FF:000563">
    <property type="entry name" value="Krueppel-like factor 8"/>
    <property type="match status" value="1"/>
</dbReference>
<dbReference type="Gene3D" id="3.30.160.60">
    <property type="entry name" value="Classic Zinc Finger"/>
    <property type="match status" value="3"/>
</dbReference>
<dbReference type="InterPro" id="IPR036236">
    <property type="entry name" value="Znf_C2H2_sf"/>
</dbReference>
<dbReference type="InterPro" id="IPR013087">
    <property type="entry name" value="Znf_C2H2_type"/>
</dbReference>
<dbReference type="PANTHER" id="PTHR23235:SF56">
    <property type="entry name" value="KRUEPPEL-LIKE FACTOR 12"/>
    <property type="match status" value="1"/>
</dbReference>
<dbReference type="PANTHER" id="PTHR23235">
    <property type="entry name" value="KRUEPPEL-LIKE TRANSCRIPTION FACTOR"/>
    <property type="match status" value="1"/>
</dbReference>
<dbReference type="Pfam" id="PF00096">
    <property type="entry name" value="zf-C2H2"/>
    <property type="match status" value="3"/>
</dbReference>
<dbReference type="SMART" id="SM00355">
    <property type="entry name" value="ZnF_C2H2"/>
    <property type="match status" value="3"/>
</dbReference>
<dbReference type="SUPFAM" id="SSF57667">
    <property type="entry name" value="beta-beta-alpha zinc fingers"/>
    <property type="match status" value="2"/>
</dbReference>
<dbReference type="PROSITE" id="PS00028">
    <property type="entry name" value="ZINC_FINGER_C2H2_1"/>
    <property type="match status" value="3"/>
</dbReference>
<dbReference type="PROSITE" id="PS50157">
    <property type="entry name" value="ZINC_FINGER_C2H2_2"/>
    <property type="match status" value="3"/>
</dbReference>
<feature type="chain" id="PRO_0000047183" description="Krueppel-like factor 12">
    <location>
        <begin position="1"/>
        <end position="402"/>
    </location>
</feature>
<feature type="zinc finger region" description="C2H2-type 1" evidence="2">
    <location>
        <begin position="317"/>
        <end position="341"/>
    </location>
</feature>
<feature type="zinc finger region" description="C2H2-type 2" evidence="2">
    <location>
        <begin position="347"/>
        <end position="371"/>
    </location>
</feature>
<feature type="zinc finger region" description="C2H2-type 3" evidence="2">
    <location>
        <begin position="377"/>
        <end position="399"/>
    </location>
</feature>
<feature type="region of interest" description="Disordered" evidence="3">
    <location>
        <begin position="81"/>
        <end position="144"/>
    </location>
</feature>
<feature type="region of interest" description="Disordered" evidence="3">
    <location>
        <begin position="219"/>
        <end position="254"/>
    </location>
</feature>
<feature type="short sequence motif" description="9aaTAD; inactive" evidence="1">
    <location>
        <begin position="80"/>
        <end position="88"/>
    </location>
</feature>
<feature type="compositionally biased region" description="Low complexity" evidence="3">
    <location>
        <begin position="89"/>
        <end position="144"/>
    </location>
</feature>
<feature type="modified residue" description="Phosphoserine" evidence="5">
    <location>
        <position position="202"/>
    </location>
</feature>
<feature type="modified residue" description="N6-methylated lysine; by EHMT2" evidence="1">
    <location>
        <position position="313"/>
    </location>
</feature>
<feature type="sequence conflict" description="In Ref. 1; CAA74670." evidence="4" ref="1">
    <original>A</original>
    <variation>G</variation>
    <location>
        <position position="105"/>
    </location>
</feature>
<feature type="sequence conflict" description="In Ref. 1; CAA74670." evidence="4" ref="1">
    <original>S</original>
    <variation>R</variation>
    <location>
        <position position="135"/>
    </location>
</feature>
<feature type="sequence conflict" description="In Ref. 1; CAA74670." evidence="4" ref="1">
    <original>A</original>
    <variation>G</variation>
    <location>
        <position position="359"/>
    </location>
</feature>
<feature type="sequence conflict" description="In Ref. 1; CAA74670." evidence="4" ref="1">
    <original>S</original>
    <variation>R</variation>
    <location>
        <position position="385"/>
    </location>
</feature>
<organism>
    <name type="scientific">Mus musculus</name>
    <name type="common">Mouse</name>
    <dbReference type="NCBI Taxonomy" id="10090"/>
    <lineage>
        <taxon>Eukaryota</taxon>
        <taxon>Metazoa</taxon>
        <taxon>Chordata</taxon>
        <taxon>Craniata</taxon>
        <taxon>Vertebrata</taxon>
        <taxon>Euteleostomi</taxon>
        <taxon>Mammalia</taxon>
        <taxon>Eutheria</taxon>
        <taxon>Euarchontoglires</taxon>
        <taxon>Glires</taxon>
        <taxon>Rodentia</taxon>
        <taxon>Myomorpha</taxon>
        <taxon>Muroidea</taxon>
        <taxon>Muridae</taxon>
        <taxon>Murinae</taxon>
        <taxon>Mus</taxon>
        <taxon>Mus</taxon>
    </lineage>
</organism>
<evidence type="ECO:0000250" key="1">
    <source>
        <dbReference type="UniProtKB" id="Q9Y4X4"/>
    </source>
</evidence>
<evidence type="ECO:0000255" key="2">
    <source>
        <dbReference type="PROSITE-ProRule" id="PRU00042"/>
    </source>
</evidence>
<evidence type="ECO:0000256" key="3">
    <source>
        <dbReference type="SAM" id="MobiDB-lite"/>
    </source>
</evidence>
<evidence type="ECO:0000305" key="4"/>
<evidence type="ECO:0007744" key="5">
    <source>
    </source>
</evidence>
<proteinExistence type="evidence at protein level"/>
<gene>
    <name type="primary">Klf12</name>
    <name type="synonym">Ap2rep</name>
</gene>